<name>PAHX1_ORYSJ</name>
<sequence>MPPAGSLTDEQLRFFDANGYLVLGSFSSAEEVRAMRDRMAELVDGFDGAGDVFSTKDHRQVKNDFFFKSAENISFFFEEKAFGDDGCLKQAKELSINKVGHALHELDPVFKKFSFGANVSSLFSSLRYKRPAVIQSMYIFKQPGIGGEVVPHQDNTFLYTDPPSCTGLWLALEDATKTNGCLWAIPGSHKNGLKRRMIRDEIDTHFDHPSPTYDLKEFVPLEVKSGDLVVIHGDLIHQSFENLSPVSRHALSLHVIDTEGCEWSKQNWLQRKIPPQPLYEN</sequence>
<organism>
    <name type="scientific">Oryza sativa subsp. japonica</name>
    <name type="common">Rice</name>
    <dbReference type="NCBI Taxonomy" id="39947"/>
    <lineage>
        <taxon>Eukaryota</taxon>
        <taxon>Viridiplantae</taxon>
        <taxon>Streptophyta</taxon>
        <taxon>Embryophyta</taxon>
        <taxon>Tracheophyta</taxon>
        <taxon>Spermatophyta</taxon>
        <taxon>Magnoliopsida</taxon>
        <taxon>Liliopsida</taxon>
        <taxon>Poales</taxon>
        <taxon>Poaceae</taxon>
        <taxon>BOP clade</taxon>
        <taxon>Oryzoideae</taxon>
        <taxon>Oryzeae</taxon>
        <taxon>Oryzinae</taxon>
        <taxon>Oryza</taxon>
        <taxon>Oryza sativa</taxon>
    </lineage>
</organism>
<reference key="1">
    <citation type="journal article" date="2005" name="Genome Res.">
        <title>Sequence, annotation, and analysis of synteny between rice chromosome 3 and diverged grass species.</title>
        <authorList>
            <consortium name="The rice chromosome 3 sequencing consortium"/>
            <person name="Buell C.R."/>
            <person name="Yuan Q."/>
            <person name="Ouyang S."/>
            <person name="Liu J."/>
            <person name="Zhu W."/>
            <person name="Wang A."/>
            <person name="Maiti R."/>
            <person name="Haas B."/>
            <person name="Wortman J."/>
            <person name="Pertea M."/>
            <person name="Jones K.M."/>
            <person name="Kim M."/>
            <person name="Overton L."/>
            <person name="Tsitrin T."/>
            <person name="Fadrosh D."/>
            <person name="Bera J."/>
            <person name="Weaver B."/>
            <person name="Jin S."/>
            <person name="Johri S."/>
            <person name="Reardon M."/>
            <person name="Webb K."/>
            <person name="Hill J."/>
            <person name="Moffat K."/>
            <person name="Tallon L."/>
            <person name="Van Aken S."/>
            <person name="Lewis M."/>
            <person name="Utterback T."/>
            <person name="Feldblyum T."/>
            <person name="Zismann V."/>
            <person name="Iobst S."/>
            <person name="Hsiao J."/>
            <person name="de Vazeille A.R."/>
            <person name="Salzberg S.L."/>
            <person name="White O."/>
            <person name="Fraser C.M."/>
            <person name="Yu Y."/>
            <person name="Kim H."/>
            <person name="Rambo T."/>
            <person name="Currie J."/>
            <person name="Collura K."/>
            <person name="Kernodle-Thompson S."/>
            <person name="Wei F."/>
            <person name="Kudrna K."/>
            <person name="Ammiraju J.S.S."/>
            <person name="Luo M."/>
            <person name="Goicoechea J.L."/>
            <person name="Wing R.A."/>
            <person name="Henry D."/>
            <person name="Oates R."/>
            <person name="Palmer M."/>
            <person name="Pries G."/>
            <person name="Saski C."/>
            <person name="Simmons J."/>
            <person name="Soderlund C."/>
            <person name="Nelson W."/>
            <person name="de la Bastide M."/>
            <person name="Spiegel L."/>
            <person name="Nascimento L."/>
            <person name="Huang E."/>
            <person name="Preston R."/>
            <person name="Zutavern T."/>
            <person name="Palmer L."/>
            <person name="O'Shaughnessy A."/>
            <person name="Dike S."/>
            <person name="McCombie W.R."/>
            <person name="Minx P."/>
            <person name="Cordum H."/>
            <person name="Wilson R."/>
            <person name="Jin W."/>
            <person name="Lee H.R."/>
            <person name="Jiang J."/>
            <person name="Jackson S."/>
        </authorList>
    </citation>
    <scope>NUCLEOTIDE SEQUENCE [LARGE SCALE GENOMIC DNA]</scope>
    <source>
        <strain>cv. Nipponbare</strain>
    </source>
</reference>
<reference key="2">
    <citation type="journal article" date="2005" name="Nature">
        <title>The map-based sequence of the rice genome.</title>
        <authorList>
            <consortium name="International rice genome sequencing project (IRGSP)"/>
        </authorList>
    </citation>
    <scope>NUCLEOTIDE SEQUENCE [LARGE SCALE GENOMIC DNA]</scope>
    <source>
        <strain>cv. Nipponbare</strain>
    </source>
</reference>
<reference key="3">
    <citation type="journal article" date="2008" name="Nucleic Acids Res.">
        <title>The rice annotation project database (RAP-DB): 2008 update.</title>
        <authorList>
            <consortium name="The rice annotation project (RAP)"/>
        </authorList>
    </citation>
    <scope>GENOME REANNOTATION</scope>
    <source>
        <strain>cv. Nipponbare</strain>
    </source>
</reference>
<reference key="4">
    <citation type="journal article" date="2013" name="Rice">
        <title>Improvement of the Oryza sativa Nipponbare reference genome using next generation sequence and optical map data.</title>
        <authorList>
            <person name="Kawahara Y."/>
            <person name="de la Bastide M."/>
            <person name="Hamilton J.P."/>
            <person name="Kanamori H."/>
            <person name="McCombie W.R."/>
            <person name="Ouyang S."/>
            <person name="Schwartz D.C."/>
            <person name="Tanaka T."/>
            <person name="Wu J."/>
            <person name="Zhou S."/>
            <person name="Childs K.L."/>
            <person name="Davidson R.M."/>
            <person name="Lin H."/>
            <person name="Quesada-Ocampo L."/>
            <person name="Vaillancourt B."/>
            <person name="Sakai H."/>
            <person name="Lee S.S."/>
            <person name="Kim J."/>
            <person name="Numa H."/>
            <person name="Itoh T."/>
            <person name="Buell C.R."/>
            <person name="Matsumoto T."/>
        </authorList>
    </citation>
    <scope>GENOME REANNOTATION</scope>
    <source>
        <strain>cv. Nipponbare</strain>
    </source>
</reference>
<reference key="5">
    <citation type="journal article" date="2005" name="PLoS Biol.">
        <title>The genomes of Oryza sativa: a history of duplications.</title>
        <authorList>
            <person name="Yu J."/>
            <person name="Wang J."/>
            <person name="Lin W."/>
            <person name="Li S."/>
            <person name="Li H."/>
            <person name="Zhou J."/>
            <person name="Ni P."/>
            <person name="Dong W."/>
            <person name="Hu S."/>
            <person name="Zeng C."/>
            <person name="Zhang J."/>
            <person name="Zhang Y."/>
            <person name="Li R."/>
            <person name="Xu Z."/>
            <person name="Li S."/>
            <person name="Li X."/>
            <person name="Zheng H."/>
            <person name="Cong L."/>
            <person name="Lin L."/>
            <person name="Yin J."/>
            <person name="Geng J."/>
            <person name="Li G."/>
            <person name="Shi J."/>
            <person name="Liu J."/>
            <person name="Lv H."/>
            <person name="Li J."/>
            <person name="Wang J."/>
            <person name="Deng Y."/>
            <person name="Ran L."/>
            <person name="Shi X."/>
            <person name="Wang X."/>
            <person name="Wu Q."/>
            <person name="Li C."/>
            <person name="Ren X."/>
            <person name="Wang J."/>
            <person name="Wang X."/>
            <person name="Li D."/>
            <person name="Liu D."/>
            <person name="Zhang X."/>
            <person name="Ji Z."/>
            <person name="Zhao W."/>
            <person name="Sun Y."/>
            <person name="Zhang Z."/>
            <person name="Bao J."/>
            <person name="Han Y."/>
            <person name="Dong L."/>
            <person name="Ji J."/>
            <person name="Chen P."/>
            <person name="Wu S."/>
            <person name="Liu J."/>
            <person name="Xiao Y."/>
            <person name="Bu D."/>
            <person name="Tan J."/>
            <person name="Yang L."/>
            <person name="Ye C."/>
            <person name="Zhang J."/>
            <person name="Xu J."/>
            <person name="Zhou Y."/>
            <person name="Yu Y."/>
            <person name="Zhang B."/>
            <person name="Zhuang S."/>
            <person name="Wei H."/>
            <person name="Liu B."/>
            <person name="Lei M."/>
            <person name="Yu H."/>
            <person name="Li Y."/>
            <person name="Xu H."/>
            <person name="Wei S."/>
            <person name="He X."/>
            <person name="Fang L."/>
            <person name="Zhang Z."/>
            <person name="Zhang Y."/>
            <person name="Huang X."/>
            <person name="Su Z."/>
            <person name="Tong W."/>
            <person name="Li J."/>
            <person name="Tong Z."/>
            <person name="Li S."/>
            <person name="Ye J."/>
            <person name="Wang L."/>
            <person name="Fang L."/>
            <person name="Lei T."/>
            <person name="Chen C.-S."/>
            <person name="Chen H.-C."/>
            <person name="Xu Z."/>
            <person name="Li H."/>
            <person name="Huang H."/>
            <person name="Zhang F."/>
            <person name="Xu H."/>
            <person name="Li N."/>
            <person name="Zhao C."/>
            <person name="Li S."/>
            <person name="Dong L."/>
            <person name="Huang Y."/>
            <person name="Li L."/>
            <person name="Xi Y."/>
            <person name="Qi Q."/>
            <person name="Li W."/>
            <person name="Zhang B."/>
            <person name="Hu W."/>
            <person name="Zhang Y."/>
            <person name="Tian X."/>
            <person name="Jiao Y."/>
            <person name="Liang X."/>
            <person name="Jin J."/>
            <person name="Gao L."/>
            <person name="Zheng W."/>
            <person name="Hao B."/>
            <person name="Liu S.-M."/>
            <person name="Wang W."/>
            <person name="Yuan L."/>
            <person name="Cao M."/>
            <person name="McDermott J."/>
            <person name="Samudrala R."/>
            <person name="Wang J."/>
            <person name="Wong G.K.-S."/>
            <person name="Yang H."/>
        </authorList>
    </citation>
    <scope>NUCLEOTIDE SEQUENCE [LARGE SCALE GENOMIC DNA]</scope>
    <source>
        <strain>cv. Nipponbare</strain>
    </source>
</reference>
<reference key="6">
    <citation type="journal article" date="2003" name="Science">
        <title>Collection, mapping, and annotation of over 28,000 cDNA clones from japonica rice.</title>
        <authorList>
            <consortium name="The rice full-length cDNA consortium"/>
        </authorList>
    </citation>
    <scope>NUCLEOTIDE SEQUENCE [LARGE SCALE MRNA]</scope>
    <source>
        <strain>cv. Nipponbare</strain>
    </source>
</reference>
<protein>
    <recommendedName>
        <fullName>Phytanoyl-CoA dioxygenase 1</fullName>
        <ecNumber>1.14.11.18</ecNumber>
    </recommendedName>
    <alternativeName>
        <fullName>Phytanoyl-CoA 2-hydroxylase</fullName>
    </alternativeName>
</protein>
<comment type="function">
    <text evidence="1">Converts phytanoyl-CoA to 2-hydroxyphytanoyl-CoA.</text>
</comment>
<comment type="catalytic activity">
    <reaction>
        <text>phytanoyl-CoA + 2-oxoglutarate + O2 = 2-hydroxyphytanoyl-CoA + succinate + CO2</text>
        <dbReference type="Rhea" id="RHEA:16065"/>
        <dbReference type="ChEBI" id="CHEBI:15379"/>
        <dbReference type="ChEBI" id="CHEBI:16526"/>
        <dbReference type="ChEBI" id="CHEBI:16810"/>
        <dbReference type="ChEBI" id="CHEBI:30031"/>
        <dbReference type="ChEBI" id="CHEBI:57334"/>
        <dbReference type="ChEBI" id="CHEBI:57391"/>
        <dbReference type="EC" id="1.14.11.18"/>
    </reaction>
</comment>
<comment type="cofactor">
    <cofactor evidence="1">
        <name>Fe cation</name>
        <dbReference type="ChEBI" id="CHEBI:24875"/>
    </cofactor>
</comment>
<comment type="cofactor">
    <cofactor evidence="1">
        <name>L-ascorbate</name>
        <dbReference type="ChEBI" id="CHEBI:38290"/>
    </cofactor>
</comment>
<comment type="pathway">
    <text>Lipid metabolism; fatty acid metabolism.</text>
</comment>
<comment type="similarity">
    <text evidence="2">Belongs to the PhyH family.</text>
</comment>
<comment type="sequence caution" evidence="2">
    <conflict type="erroneous gene model prediction">
        <sequence resource="EMBL-CDS" id="BAF12949"/>
    </conflict>
</comment>
<dbReference type="EC" id="1.14.11.18"/>
<dbReference type="EMBL" id="AC087797">
    <property type="protein sequence ID" value="AAK50124.1"/>
    <property type="molecule type" value="Genomic_DNA"/>
</dbReference>
<dbReference type="EMBL" id="DP000009">
    <property type="protein sequence ID" value="ABF98480.1"/>
    <property type="molecule type" value="Genomic_DNA"/>
</dbReference>
<dbReference type="EMBL" id="AP008209">
    <property type="protein sequence ID" value="BAF12949.1"/>
    <property type="status" value="ALT_SEQ"/>
    <property type="molecule type" value="Genomic_DNA"/>
</dbReference>
<dbReference type="EMBL" id="AP014959">
    <property type="protein sequence ID" value="BAS85990.1"/>
    <property type="molecule type" value="Genomic_DNA"/>
</dbReference>
<dbReference type="EMBL" id="CM000140">
    <property type="protein sequence ID" value="EEE59782.1"/>
    <property type="molecule type" value="Genomic_DNA"/>
</dbReference>
<dbReference type="EMBL" id="AK103821">
    <property type="status" value="NOT_ANNOTATED_CDS"/>
    <property type="molecule type" value="mRNA"/>
</dbReference>
<dbReference type="SMR" id="Q10E49"/>
<dbReference type="FunCoup" id="Q10E49">
    <property type="interactions" value="2743"/>
</dbReference>
<dbReference type="STRING" id="39947.Q10E49"/>
<dbReference type="PaxDb" id="39947-Q10E49"/>
<dbReference type="EnsemblPlants" id="Os03t0708100-01">
    <property type="protein sequence ID" value="Os03t0708100-01"/>
    <property type="gene ID" value="Os03g0708100"/>
</dbReference>
<dbReference type="Gramene" id="Os03t0708100-01">
    <property type="protein sequence ID" value="Os03t0708100-01"/>
    <property type="gene ID" value="Os03g0708100"/>
</dbReference>
<dbReference type="KEGG" id="dosa:Os03g0708100"/>
<dbReference type="eggNOG" id="KOG3290">
    <property type="taxonomic scope" value="Eukaryota"/>
</dbReference>
<dbReference type="HOGENOM" id="CLU_048953_0_0_1"/>
<dbReference type="InParanoid" id="Q10E49"/>
<dbReference type="OMA" id="KYSEDNW"/>
<dbReference type="UniPathway" id="UPA00199"/>
<dbReference type="Proteomes" id="UP000000763">
    <property type="component" value="Chromosome 3"/>
</dbReference>
<dbReference type="Proteomes" id="UP000007752">
    <property type="component" value="Chromosome 3"/>
</dbReference>
<dbReference type="Proteomes" id="UP000059680">
    <property type="component" value="Chromosome 3"/>
</dbReference>
<dbReference type="ExpressionAtlas" id="Q10E49">
    <property type="expression patterns" value="baseline and differential"/>
</dbReference>
<dbReference type="GO" id="GO:0031418">
    <property type="term" value="F:L-ascorbic acid binding"/>
    <property type="evidence" value="ECO:0007669"/>
    <property type="project" value="UniProtKB-KW"/>
</dbReference>
<dbReference type="GO" id="GO:0046872">
    <property type="term" value="F:metal ion binding"/>
    <property type="evidence" value="ECO:0007669"/>
    <property type="project" value="UniProtKB-KW"/>
</dbReference>
<dbReference type="GO" id="GO:0048244">
    <property type="term" value="F:phytanoyl-CoA dioxygenase activity"/>
    <property type="evidence" value="ECO:0000318"/>
    <property type="project" value="GO_Central"/>
</dbReference>
<dbReference type="GO" id="GO:0006631">
    <property type="term" value="P:fatty acid metabolic process"/>
    <property type="evidence" value="ECO:0007669"/>
    <property type="project" value="UniProtKB-UniPathway"/>
</dbReference>
<dbReference type="Gene3D" id="2.60.120.620">
    <property type="entry name" value="q2cbj1_9rhob like domain"/>
    <property type="match status" value="1"/>
</dbReference>
<dbReference type="InterPro" id="IPR008775">
    <property type="entry name" value="Phytyl_CoA_dOase-like"/>
</dbReference>
<dbReference type="PANTHER" id="PTHR20883">
    <property type="entry name" value="PHYTANOYL-COA DIOXYGENASE DOMAIN CONTAINING 1"/>
    <property type="match status" value="1"/>
</dbReference>
<dbReference type="PANTHER" id="PTHR20883:SF15">
    <property type="entry name" value="PHYTANOYL-COA DIOXYGENASE DOMAIN-CONTAINING PROTEIN 1"/>
    <property type="match status" value="1"/>
</dbReference>
<dbReference type="Pfam" id="PF05721">
    <property type="entry name" value="PhyH"/>
    <property type="match status" value="1"/>
</dbReference>
<dbReference type="SUPFAM" id="SSF51197">
    <property type="entry name" value="Clavaminate synthase-like"/>
    <property type="match status" value="1"/>
</dbReference>
<gene>
    <name type="ordered locus">Os03g0708100</name>
    <name type="ordered locus">LOC_Os03g50040</name>
    <name type="ORF">OsJ_12289</name>
    <name type="ORF">OSJNBb0022E02.8</name>
</gene>
<feature type="chain" id="PRO_0000424905" description="Phytanoyl-CoA dioxygenase 1">
    <location>
        <begin position="1"/>
        <end position="281"/>
    </location>
</feature>
<feature type="binding site" evidence="1">
    <location>
        <position position="98"/>
    </location>
    <ligand>
        <name>2-oxoglutarate</name>
        <dbReference type="ChEBI" id="CHEBI:16810"/>
    </ligand>
</feature>
<feature type="binding site" evidence="1">
    <location>
        <position position="137"/>
    </location>
    <ligand>
        <name>2-oxoglutarate</name>
        <dbReference type="ChEBI" id="CHEBI:16810"/>
    </ligand>
</feature>
<feature type="binding site" evidence="1">
    <location>
        <begin position="152"/>
        <end position="154"/>
    </location>
    <ligand>
        <name>2-oxoglutarate</name>
        <dbReference type="ChEBI" id="CHEBI:16810"/>
    </ligand>
</feature>
<feature type="binding site" evidence="1">
    <location>
        <position position="152"/>
    </location>
    <ligand>
        <name>Fe cation</name>
        <dbReference type="ChEBI" id="CHEBI:24875"/>
    </ligand>
</feature>
<feature type="binding site" evidence="1">
    <location>
        <position position="154"/>
    </location>
    <ligand>
        <name>Fe cation</name>
        <dbReference type="ChEBI" id="CHEBI:24875"/>
    </ligand>
</feature>
<feature type="binding site" evidence="1">
    <location>
        <position position="169"/>
    </location>
    <ligand>
        <name>2-oxoglutarate</name>
        <dbReference type="ChEBI" id="CHEBI:16810"/>
    </ligand>
</feature>
<feature type="binding site" evidence="1">
    <location>
        <position position="237"/>
    </location>
    <ligand>
        <name>Fe cation</name>
        <dbReference type="ChEBI" id="CHEBI:24875"/>
    </ligand>
</feature>
<feature type="binding site" evidence="1">
    <location>
        <position position="239"/>
    </location>
    <ligand>
        <name>2-oxoglutarate</name>
        <dbReference type="ChEBI" id="CHEBI:16810"/>
    </ligand>
</feature>
<feature type="binding site" evidence="1">
    <location>
        <position position="248"/>
    </location>
    <ligand>
        <name>2-oxoglutarate</name>
        <dbReference type="ChEBI" id="CHEBI:16810"/>
    </ligand>
</feature>
<evidence type="ECO:0000250" key="1"/>
<evidence type="ECO:0000305" key="2"/>
<accession>Q10E49</accession>
<accession>A0A0P0W2V2</accession>
<accession>Q0DP89</accession>
<accession>Q94GR4</accession>
<keyword id="KW-0223">Dioxygenase</keyword>
<keyword id="KW-0408">Iron</keyword>
<keyword id="KW-0479">Metal-binding</keyword>
<keyword id="KW-0560">Oxidoreductase</keyword>
<keyword id="KW-1185">Reference proteome</keyword>
<keyword id="KW-0847">Vitamin C</keyword>
<proteinExistence type="evidence at transcript level"/>